<accession>I6LAD1</accession>
<dbReference type="EMBL" id="AY310405">
    <property type="protein sequence ID" value="AAQ63446.1"/>
    <property type="molecule type" value="Genomic_DNA"/>
</dbReference>
<dbReference type="IntAct" id="I6LAD1">
    <property type="interactions" value="3"/>
</dbReference>
<dbReference type="MINT" id="I6LAD1"/>
<dbReference type="iPTMnet" id="I6LAD1"/>
<dbReference type="GO" id="GO:0005778">
    <property type="term" value="C:peroxisomal membrane"/>
    <property type="evidence" value="ECO:0007669"/>
    <property type="project" value="UniProtKB-SubCell"/>
</dbReference>
<dbReference type="GO" id="GO:0000407">
    <property type="term" value="C:phagophore assembly site"/>
    <property type="evidence" value="ECO:0007669"/>
    <property type="project" value="UniProtKB-SubCell"/>
</dbReference>
<dbReference type="GO" id="GO:0005775">
    <property type="term" value="C:vacuolar lumen"/>
    <property type="evidence" value="ECO:0007669"/>
    <property type="project" value="UniProtKB-SubCell"/>
</dbReference>
<dbReference type="GO" id="GO:0006914">
    <property type="term" value="P:autophagy"/>
    <property type="evidence" value="ECO:0007669"/>
    <property type="project" value="UniProtKB-KW"/>
</dbReference>
<dbReference type="GO" id="GO:0015031">
    <property type="term" value="P:protein transport"/>
    <property type="evidence" value="ECO:0007669"/>
    <property type="project" value="UniProtKB-KW"/>
</dbReference>
<sequence length="384" mass="44298">MFSRKQVQKRNNELSSLHCSNSSNSLNRIHKNEETAKGTVGVNARGNNRSDNVASPGQLRPRTSSILTDNSEWILFSPENAEGEYVITSSDGIRRTNSNHYYYNYNEDDILSSSRRSSEDVYDAEQEYTEQPVNNHVQVEDEEDDDSIINDLTHVVDDYDYEEEDDKQDLTTRIDNWRKKQVSELLNELNHDDDLDPVLNRDKIDLIQSWGIENEKLNTKPRAKKRQRKSKRASFYGQDLLSKYSMEDLKIIKQIVAQLRDDLDKVKHDKPSSPLPNYHNTLKQAPSSNSQNPSFISYYSNYLTKNNSQQTPNSQSTSGSLLNNPNLEKYLPLFLKNLLYEDSNGSHQHPETSEKEHFWDNDLKSVNSSILTLSSNSKLKQEIL</sequence>
<protein>
    <recommendedName>
        <fullName>Autophagy-related protein 30</fullName>
    </recommendedName>
</protein>
<proteinExistence type="evidence at protein level"/>
<name>ATG30_PICPA</name>
<reference key="1">
    <citation type="journal article" date="2008" name="Dev. Cell">
        <title>PpAtg30 tags peroxisomes for turnover by selective autophagy.</title>
        <authorList>
            <person name="Farre J.C."/>
            <person name="Manjithaya R."/>
            <person name="Mathewson R.D."/>
            <person name="Subramani S."/>
        </authorList>
    </citation>
    <scope>NUCLEOTIDE SEQUENCE [GENOMIC DNA]</scope>
    <scope>SUBCELLULAR LOCATION</scope>
    <scope>FUNCTION</scope>
    <scope>PHOSPHORYLATION AT SER-112</scope>
    <scope>MUTAGENESIS OF SER-112</scope>
    <scope>INTERACTION WITH ATG11; ATG17; PEX3 AND PEX14</scope>
</reference>
<keyword id="KW-0072">Autophagy</keyword>
<keyword id="KW-0472">Membrane</keyword>
<keyword id="KW-0576">Peroxisome</keyword>
<keyword id="KW-0597">Phosphoprotein</keyword>
<keyword id="KW-0653">Protein transport</keyword>
<keyword id="KW-0813">Transport</keyword>
<keyword id="KW-0926">Vacuole</keyword>
<gene>
    <name type="primary">ATG30</name>
</gene>
<feature type="chain" id="PRO_0000422168" description="Autophagy-related protein 30">
    <location>
        <begin position="1"/>
        <end position="384"/>
    </location>
</feature>
<feature type="region of interest" description="Disordered" evidence="1">
    <location>
        <begin position="1"/>
        <end position="63"/>
    </location>
</feature>
<feature type="region of interest" description="Disordered" evidence="1">
    <location>
        <begin position="266"/>
        <end position="291"/>
    </location>
</feature>
<feature type="compositionally biased region" description="Low complexity" evidence="1">
    <location>
        <begin position="13"/>
        <end position="27"/>
    </location>
</feature>
<feature type="compositionally biased region" description="Polar residues" evidence="1">
    <location>
        <begin position="45"/>
        <end position="63"/>
    </location>
</feature>
<feature type="compositionally biased region" description="Polar residues" evidence="1">
    <location>
        <begin position="278"/>
        <end position="291"/>
    </location>
</feature>
<feature type="modified residue" description="Phosphoserine" evidence="2">
    <location>
        <position position="112"/>
    </location>
</feature>
<feature type="mutagenesis site" description="Impairs pexophagy." evidence="2">
    <original>S</original>
    <variation>A</variation>
    <location>
        <position position="112"/>
    </location>
</feature>
<comment type="function">
    <text evidence="2">Acts as the peroxisome receptor for pexophagy. Required for both micropexophagy and macropexophagy, but not for the cytoplasm to vacuole transport (Cvt) or autophagy pathways. Required for functional micropexophagic apparatus (MIPA) and relocation of ATG11 to the peroxisome-sequestering arms of the vacuole.</text>
</comment>
<comment type="subunit">
    <text evidence="2">Interacts with ATG11, ATG17, PEX3 and PEX14.</text>
</comment>
<comment type="interaction">
    <interactant intactId="EBI-8849497">
        <id>I6LAD1</id>
    </interactant>
    <interactant intactId="EBI-8849485">
        <id>Q8NJJ4</id>
        <label>ATG8</label>
    </interactant>
    <organismsDiffer>false</organismsDiffer>
    <experiments>3</experiments>
</comment>
<comment type="interaction">
    <interactant intactId="EBI-8849497">
        <id>I6LAD1</id>
    </interactant>
    <interactant intactId="EBI-8849514">
        <id>Q92262</id>
        <label>PEX3</label>
    </interactant>
    <organismsDiffer>false</organismsDiffer>
    <experiments>3</experiments>
</comment>
<comment type="subcellular location">
    <subcellularLocation>
        <location evidence="2">Vacuole lumen</location>
    </subcellularLocation>
    <subcellularLocation>
        <location evidence="2">Preautophagosomal structure</location>
    </subcellularLocation>
    <subcellularLocation>
        <location evidence="2">Peroxisome membrane</location>
        <topology evidence="2">Peripheral membrane protein</topology>
    </subcellularLocation>
    <text>Surrounds the peroxisome cluster, but a small amount is also inside the vacuole in methanol-grown cells. Upon induction of micropexophagy, localizes inside the vacuolar lumen. Also localizes near peroxisomes during early stages of micropexophagy.</text>
</comment>
<comment type="PTM">
    <text evidence="2">Phosphorylation at Ser-112 is required for micro- and macropexophagy.</text>
</comment>
<organism>
    <name type="scientific">Komagataella pastoris</name>
    <name type="common">Yeast</name>
    <name type="synonym">Pichia pastoris</name>
    <dbReference type="NCBI Taxonomy" id="4922"/>
    <lineage>
        <taxon>Eukaryota</taxon>
        <taxon>Fungi</taxon>
        <taxon>Dikarya</taxon>
        <taxon>Ascomycota</taxon>
        <taxon>Saccharomycotina</taxon>
        <taxon>Pichiomycetes</taxon>
        <taxon>Pichiales</taxon>
        <taxon>Pichiaceae</taxon>
        <taxon>Komagataella</taxon>
    </lineage>
</organism>
<evidence type="ECO:0000256" key="1">
    <source>
        <dbReference type="SAM" id="MobiDB-lite"/>
    </source>
</evidence>
<evidence type="ECO:0000269" key="2">
    <source>
    </source>
</evidence>